<comment type="function">
    <text>Gamma chains make up the fetal hemoglobin F, in combination with alpha chains.</text>
</comment>
<comment type="subunit">
    <text>Heterotetramer of two alpha chains and two gamma chains in fetal hemoglobin (Hb F).</text>
</comment>
<comment type="tissue specificity">
    <text>Red blood cells.</text>
</comment>
<comment type="similarity">
    <text evidence="1">Belongs to the globin family.</text>
</comment>
<reference key="1">
    <citation type="journal article" date="1988" name="J. Biol. Chem.">
        <title>Rhesus fetal globin genes. Concerted gene evolution in the descent of higher primates.</title>
        <authorList>
            <person name="Slightom J.L."/>
            <person name="Koop B.F."/>
            <person name="Xu P."/>
            <person name="Goodman M."/>
        </authorList>
    </citation>
    <scope>NUCLEOTIDE SEQUENCE [GENOMIC DNA]</scope>
</reference>
<reference key="2">
    <citation type="journal article" date="1980" name="Biochemistry">
        <title>Fetal hemoglobin of the rhesus monkey, Macaca mulatta: complete primary structure of the gamma chain.</title>
        <authorList>
            <person name="Mahoney W.C."/>
            <person name="Nute P.E."/>
        </authorList>
    </citation>
    <scope>PROTEIN SEQUENCE OF 2-147</scope>
</reference>
<proteinExistence type="evidence at protein level"/>
<gene>
    <name type="primary">HBG</name>
</gene>
<keyword id="KW-0903">Direct protein sequencing</keyword>
<keyword id="KW-0349">Heme</keyword>
<keyword id="KW-0408">Iron</keyword>
<keyword id="KW-0479">Metal-binding</keyword>
<keyword id="KW-0561">Oxygen transport</keyword>
<keyword id="KW-1185">Reference proteome</keyword>
<keyword id="KW-0813">Transport</keyword>
<dbReference type="EMBL" id="M19434">
    <property type="protein sequence ID" value="AAA36846.1"/>
    <property type="molecule type" value="Genomic_DNA"/>
</dbReference>
<dbReference type="PIR" id="A31109">
    <property type="entry name" value="HGMQR"/>
</dbReference>
<dbReference type="SMR" id="P68077"/>
<dbReference type="FunCoup" id="P68077">
    <property type="interactions" value="13"/>
</dbReference>
<dbReference type="PaxDb" id="9544-ENSMMUP00000031232"/>
<dbReference type="eggNOG" id="KOG3378">
    <property type="taxonomic scope" value="Eukaryota"/>
</dbReference>
<dbReference type="InParanoid" id="P68077"/>
<dbReference type="OrthoDB" id="9886081at2759"/>
<dbReference type="Proteomes" id="UP000006718">
    <property type="component" value="Unassembled WGS sequence"/>
</dbReference>
<dbReference type="GO" id="GO:0031838">
    <property type="term" value="C:haptoglobin-hemoglobin complex"/>
    <property type="evidence" value="ECO:0000318"/>
    <property type="project" value="GO_Central"/>
</dbReference>
<dbReference type="GO" id="GO:0005833">
    <property type="term" value="C:hemoglobin complex"/>
    <property type="evidence" value="ECO:0000318"/>
    <property type="project" value="GO_Central"/>
</dbReference>
<dbReference type="GO" id="GO:0020037">
    <property type="term" value="F:heme binding"/>
    <property type="evidence" value="ECO:0000318"/>
    <property type="project" value="GO_Central"/>
</dbReference>
<dbReference type="GO" id="GO:0031721">
    <property type="term" value="F:hemoglobin alpha binding"/>
    <property type="evidence" value="ECO:0000318"/>
    <property type="project" value="GO_Central"/>
</dbReference>
<dbReference type="GO" id="GO:0046872">
    <property type="term" value="F:metal ion binding"/>
    <property type="evidence" value="ECO:0007669"/>
    <property type="project" value="UniProtKB-KW"/>
</dbReference>
<dbReference type="GO" id="GO:0019825">
    <property type="term" value="F:oxygen binding"/>
    <property type="evidence" value="ECO:0000318"/>
    <property type="project" value="GO_Central"/>
</dbReference>
<dbReference type="GO" id="GO:0005344">
    <property type="term" value="F:oxygen carrier activity"/>
    <property type="evidence" value="ECO:0000318"/>
    <property type="project" value="GO_Central"/>
</dbReference>
<dbReference type="GO" id="GO:0098869">
    <property type="term" value="P:cellular oxidant detoxification"/>
    <property type="evidence" value="ECO:0007669"/>
    <property type="project" value="GOC"/>
</dbReference>
<dbReference type="GO" id="GO:0042744">
    <property type="term" value="P:hydrogen peroxide catabolic process"/>
    <property type="evidence" value="ECO:0000318"/>
    <property type="project" value="GO_Central"/>
</dbReference>
<dbReference type="CDD" id="cd08925">
    <property type="entry name" value="Hb-beta-like"/>
    <property type="match status" value="1"/>
</dbReference>
<dbReference type="FunFam" id="1.10.490.10:FF:000001">
    <property type="entry name" value="Hemoglobin subunit beta"/>
    <property type="match status" value="1"/>
</dbReference>
<dbReference type="Gene3D" id="1.10.490.10">
    <property type="entry name" value="Globins"/>
    <property type="match status" value="1"/>
</dbReference>
<dbReference type="InterPro" id="IPR000971">
    <property type="entry name" value="Globin"/>
</dbReference>
<dbReference type="InterPro" id="IPR009050">
    <property type="entry name" value="Globin-like_sf"/>
</dbReference>
<dbReference type="InterPro" id="IPR012292">
    <property type="entry name" value="Globin/Proto"/>
</dbReference>
<dbReference type="InterPro" id="IPR002337">
    <property type="entry name" value="Hemoglobin_b"/>
</dbReference>
<dbReference type="InterPro" id="IPR050056">
    <property type="entry name" value="Hemoglobin_oxygen_transport"/>
</dbReference>
<dbReference type="PANTHER" id="PTHR11442">
    <property type="entry name" value="HEMOGLOBIN FAMILY MEMBER"/>
    <property type="match status" value="1"/>
</dbReference>
<dbReference type="PANTHER" id="PTHR11442:SF52">
    <property type="entry name" value="HEMOGLOBIN SUBUNIT GAMMA-1"/>
    <property type="match status" value="1"/>
</dbReference>
<dbReference type="Pfam" id="PF00042">
    <property type="entry name" value="Globin"/>
    <property type="match status" value="1"/>
</dbReference>
<dbReference type="PRINTS" id="PR00814">
    <property type="entry name" value="BETAHAEM"/>
</dbReference>
<dbReference type="SUPFAM" id="SSF46458">
    <property type="entry name" value="Globin-like"/>
    <property type="match status" value="1"/>
</dbReference>
<dbReference type="PROSITE" id="PS01033">
    <property type="entry name" value="GLOBIN"/>
    <property type="match status" value="1"/>
</dbReference>
<name>HBG_MACMU</name>
<feature type="initiator methionine" description="Removed" evidence="2">
    <location>
        <position position="1"/>
    </location>
</feature>
<feature type="chain" id="PRO_0000053259" description="Hemoglobin subunit gamma">
    <location>
        <begin position="2"/>
        <end position="147"/>
    </location>
</feature>
<feature type="domain" description="Globin" evidence="1">
    <location>
        <begin position="3"/>
        <end position="147"/>
    </location>
</feature>
<feature type="binding site" description="distal binding residue" evidence="1">
    <location>
        <position position="64"/>
    </location>
    <ligand>
        <name>heme b</name>
        <dbReference type="ChEBI" id="CHEBI:60344"/>
    </ligand>
    <ligandPart>
        <name>Fe</name>
        <dbReference type="ChEBI" id="CHEBI:18248"/>
    </ligandPart>
</feature>
<feature type="binding site" description="proximal binding residue" evidence="1">
    <location>
        <position position="93"/>
    </location>
    <ligand>
        <name>heme b</name>
        <dbReference type="ChEBI" id="CHEBI:60344"/>
    </ligand>
    <ligandPart>
        <name>Fe</name>
        <dbReference type="ChEBI" id="CHEBI:18248"/>
    </ligandPart>
</feature>
<sequence>MGHFTEEDKATITSLWGKVNVEDAGGETLGRLLVVYPWTQRFFDSFGNLSSASAIMGNPKVKAHGKKVLTSLGDAIKNLDDLKGTFAQLSELHCDKLHVDPENFRLLGNVLVTVLAIHFGKEFTPEVQASWQKMVAGVASALSSRYH</sequence>
<protein>
    <recommendedName>
        <fullName>Hemoglobin subunit gamma</fullName>
    </recommendedName>
    <alternativeName>
        <fullName>Gamma-globin</fullName>
    </alternativeName>
    <alternativeName>
        <fullName>Hemoglobin gamma chain</fullName>
    </alternativeName>
</protein>
<evidence type="ECO:0000255" key="1">
    <source>
        <dbReference type="PROSITE-ProRule" id="PRU00238"/>
    </source>
</evidence>
<evidence type="ECO:0000269" key="2">
    <source>
    </source>
</evidence>
<organism>
    <name type="scientific">Macaca mulatta</name>
    <name type="common">Rhesus macaque</name>
    <dbReference type="NCBI Taxonomy" id="9544"/>
    <lineage>
        <taxon>Eukaryota</taxon>
        <taxon>Metazoa</taxon>
        <taxon>Chordata</taxon>
        <taxon>Craniata</taxon>
        <taxon>Vertebrata</taxon>
        <taxon>Euteleostomi</taxon>
        <taxon>Mammalia</taxon>
        <taxon>Eutheria</taxon>
        <taxon>Euarchontoglires</taxon>
        <taxon>Primates</taxon>
        <taxon>Haplorrhini</taxon>
        <taxon>Catarrhini</taxon>
        <taxon>Cercopithecidae</taxon>
        <taxon>Cercopithecinae</taxon>
        <taxon>Macaca</taxon>
    </lineage>
</organism>
<accession>P68077</accession>
<accession>P02098</accession>